<protein>
    <recommendedName>
        <fullName evidence="1">Glutaminase</fullName>
        <ecNumber evidence="1">3.5.1.2</ecNumber>
    </recommendedName>
</protein>
<name>GLSA_METPB</name>
<evidence type="ECO:0000255" key="1">
    <source>
        <dbReference type="HAMAP-Rule" id="MF_00313"/>
    </source>
</evidence>
<feature type="chain" id="PRO_1000119533" description="Glutaminase">
    <location>
        <begin position="1"/>
        <end position="309"/>
    </location>
</feature>
<feature type="binding site" evidence="1">
    <location>
        <position position="64"/>
    </location>
    <ligand>
        <name>substrate</name>
    </ligand>
</feature>
<feature type="binding site" evidence="1">
    <location>
        <position position="114"/>
    </location>
    <ligand>
        <name>substrate</name>
    </ligand>
</feature>
<feature type="binding site" evidence="1">
    <location>
        <position position="160"/>
    </location>
    <ligand>
        <name>substrate</name>
    </ligand>
</feature>
<feature type="binding site" evidence="1">
    <location>
        <position position="167"/>
    </location>
    <ligand>
        <name>substrate</name>
    </ligand>
</feature>
<feature type="binding site" evidence="1">
    <location>
        <position position="191"/>
    </location>
    <ligand>
        <name>substrate</name>
    </ligand>
</feature>
<feature type="binding site" evidence="1">
    <location>
        <position position="243"/>
    </location>
    <ligand>
        <name>substrate</name>
    </ligand>
</feature>
<feature type="binding site" evidence="1">
    <location>
        <position position="261"/>
    </location>
    <ligand>
        <name>substrate</name>
    </ligand>
</feature>
<comment type="catalytic activity">
    <reaction evidence="1">
        <text>L-glutamine + H2O = L-glutamate + NH4(+)</text>
        <dbReference type="Rhea" id="RHEA:15889"/>
        <dbReference type="ChEBI" id="CHEBI:15377"/>
        <dbReference type="ChEBI" id="CHEBI:28938"/>
        <dbReference type="ChEBI" id="CHEBI:29985"/>
        <dbReference type="ChEBI" id="CHEBI:58359"/>
        <dbReference type="EC" id="3.5.1.2"/>
    </reaction>
</comment>
<comment type="subunit">
    <text evidence="1">Homotetramer.</text>
</comment>
<comment type="similarity">
    <text evidence="1">Belongs to the glutaminase family.</text>
</comment>
<proteinExistence type="inferred from homology"/>
<gene>
    <name evidence="1" type="primary">glsA</name>
    <name type="ordered locus">Mpop_2331</name>
</gene>
<sequence length="309" mass="33117">MPDLDRIVKDIAEEMRARPDRGAVASYIPELARADPQAFGLVVIDGDGRVAAGGDADIAFSIQSISKVFTLTLALGMVGDRLWRRVGREPSGSPFNSIVQLERENGIPRNPFINAGAIAVTDVILSGHQPREALGEILRFMQFLAQDDSIAIDDRVAASEKRTGFRNAALANYMRSFDVIENPVDYTLGVYFHHCAIAMTCRQLATAGLFLAYSGHHPLAGHSVISAERARRINAIMLTCGHYDGSGDFAYRVGLPGKSGVGGGILAVAPGRASICVWSPGLDAAGNSHLGRIALEMLVKRTGWSIFGV</sequence>
<dbReference type="EC" id="3.5.1.2" evidence="1"/>
<dbReference type="EMBL" id="CP001029">
    <property type="protein sequence ID" value="ACB80493.1"/>
    <property type="molecule type" value="Genomic_DNA"/>
</dbReference>
<dbReference type="RefSeq" id="WP_012454225.1">
    <property type="nucleotide sequence ID" value="NC_010725.1"/>
</dbReference>
<dbReference type="SMR" id="B1Z987"/>
<dbReference type="STRING" id="441620.Mpop_2331"/>
<dbReference type="KEGG" id="mpo:Mpop_2331"/>
<dbReference type="eggNOG" id="COG2066">
    <property type="taxonomic scope" value="Bacteria"/>
</dbReference>
<dbReference type="HOGENOM" id="CLU_027932_1_1_5"/>
<dbReference type="OrthoDB" id="9788822at2"/>
<dbReference type="Proteomes" id="UP000007136">
    <property type="component" value="Chromosome"/>
</dbReference>
<dbReference type="GO" id="GO:0004359">
    <property type="term" value="F:glutaminase activity"/>
    <property type="evidence" value="ECO:0007669"/>
    <property type="project" value="UniProtKB-UniRule"/>
</dbReference>
<dbReference type="GO" id="GO:0006537">
    <property type="term" value="P:glutamate biosynthetic process"/>
    <property type="evidence" value="ECO:0007669"/>
    <property type="project" value="TreeGrafter"/>
</dbReference>
<dbReference type="GO" id="GO:0006543">
    <property type="term" value="P:glutamine catabolic process"/>
    <property type="evidence" value="ECO:0007669"/>
    <property type="project" value="TreeGrafter"/>
</dbReference>
<dbReference type="FunFam" id="3.40.710.10:FF:000005">
    <property type="entry name" value="Glutaminase"/>
    <property type="match status" value="1"/>
</dbReference>
<dbReference type="Gene3D" id="3.40.710.10">
    <property type="entry name" value="DD-peptidase/beta-lactamase superfamily"/>
    <property type="match status" value="1"/>
</dbReference>
<dbReference type="HAMAP" id="MF_00313">
    <property type="entry name" value="Glutaminase"/>
    <property type="match status" value="1"/>
</dbReference>
<dbReference type="InterPro" id="IPR012338">
    <property type="entry name" value="Beta-lactam/transpept-like"/>
</dbReference>
<dbReference type="InterPro" id="IPR015868">
    <property type="entry name" value="Glutaminase"/>
</dbReference>
<dbReference type="NCBIfam" id="TIGR03814">
    <property type="entry name" value="Gln_ase"/>
    <property type="match status" value="1"/>
</dbReference>
<dbReference type="NCBIfam" id="NF002133">
    <property type="entry name" value="PRK00971.1-2"/>
    <property type="match status" value="1"/>
</dbReference>
<dbReference type="PANTHER" id="PTHR12544">
    <property type="entry name" value="GLUTAMINASE"/>
    <property type="match status" value="1"/>
</dbReference>
<dbReference type="PANTHER" id="PTHR12544:SF29">
    <property type="entry name" value="GLUTAMINASE"/>
    <property type="match status" value="1"/>
</dbReference>
<dbReference type="Pfam" id="PF04960">
    <property type="entry name" value="Glutaminase"/>
    <property type="match status" value="1"/>
</dbReference>
<dbReference type="SUPFAM" id="SSF56601">
    <property type="entry name" value="beta-lactamase/transpeptidase-like"/>
    <property type="match status" value="1"/>
</dbReference>
<accession>B1Z987</accession>
<reference key="1">
    <citation type="submission" date="2008-04" db="EMBL/GenBank/DDBJ databases">
        <title>Complete sequence of chromosome of Methylobacterium populi BJ001.</title>
        <authorList>
            <consortium name="US DOE Joint Genome Institute"/>
            <person name="Copeland A."/>
            <person name="Lucas S."/>
            <person name="Lapidus A."/>
            <person name="Glavina del Rio T."/>
            <person name="Dalin E."/>
            <person name="Tice H."/>
            <person name="Bruce D."/>
            <person name="Goodwin L."/>
            <person name="Pitluck S."/>
            <person name="Chertkov O."/>
            <person name="Brettin T."/>
            <person name="Detter J.C."/>
            <person name="Han C."/>
            <person name="Kuske C.R."/>
            <person name="Schmutz J."/>
            <person name="Larimer F."/>
            <person name="Land M."/>
            <person name="Hauser L."/>
            <person name="Kyrpides N."/>
            <person name="Mikhailova N."/>
            <person name="Marx C."/>
            <person name="Richardson P."/>
        </authorList>
    </citation>
    <scope>NUCLEOTIDE SEQUENCE [LARGE SCALE GENOMIC DNA]</scope>
    <source>
        <strain>ATCC BAA-705 / NCIMB 13946 / BJ001</strain>
    </source>
</reference>
<organism>
    <name type="scientific">Methylorubrum populi (strain ATCC BAA-705 / NCIMB 13946 / BJ001)</name>
    <name type="common">Methylobacterium populi</name>
    <dbReference type="NCBI Taxonomy" id="441620"/>
    <lineage>
        <taxon>Bacteria</taxon>
        <taxon>Pseudomonadati</taxon>
        <taxon>Pseudomonadota</taxon>
        <taxon>Alphaproteobacteria</taxon>
        <taxon>Hyphomicrobiales</taxon>
        <taxon>Methylobacteriaceae</taxon>
        <taxon>Methylorubrum</taxon>
    </lineage>
</organism>
<keyword id="KW-0378">Hydrolase</keyword>